<proteinExistence type="evidence at transcript level"/>
<accession>A0A976XK90</accession>
<sequence length="140" mass="14553">MKTSTALVLLLALTATSASSGDHQFIDEQNIMNVAEGKNVISSLSSSGGGDDAAAIMESVLVNGGNRKMVFMMVSGSQANCIPTGQPCGVLHQCCDGNFCTDPFYGTCTVKHCVPKGQPCGVLHPCCEGMCPDPIYGTCR</sequence>
<evidence type="ECO:0000250" key="1">
    <source>
        <dbReference type="UniProtKB" id="A0A976XJR9"/>
    </source>
</evidence>
<evidence type="ECO:0000255" key="2"/>
<evidence type="ECO:0000303" key="3">
    <source>
    </source>
</evidence>
<evidence type="ECO:0000305" key="4"/>
<evidence type="ECO:0000305" key="5">
    <source>
    </source>
</evidence>
<evidence type="ECO:0000312" key="6">
    <source>
        <dbReference type="EMBL" id="UVC57622.1"/>
    </source>
</evidence>
<keyword id="KW-1015">Disulfide bond</keyword>
<keyword id="KW-0872">Ion channel impairing toxin</keyword>
<keyword id="KW-0960">Knottin</keyword>
<keyword id="KW-0528">Neurotoxin</keyword>
<keyword id="KW-0611">Plant defense</keyword>
<keyword id="KW-0964">Secreted</keyword>
<keyword id="KW-0732">Signal</keyword>
<keyword id="KW-0800">Toxin</keyword>
<keyword id="KW-0738">Voltage-gated sodium channel impairing toxin</keyword>
<dbReference type="EMBL" id="OK376604">
    <property type="protein sequence ID" value="UVC57622.1"/>
    <property type="molecule type" value="mRNA"/>
</dbReference>
<dbReference type="GO" id="GO:0005576">
    <property type="term" value="C:extracellular region"/>
    <property type="evidence" value="ECO:0007669"/>
    <property type="project" value="UniProtKB-SubCell"/>
</dbReference>
<dbReference type="GO" id="GO:0017080">
    <property type="term" value="F:sodium channel regulator activity"/>
    <property type="evidence" value="ECO:0007669"/>
    <property type="project" value="UniProtKB-KW"/>
</dbReference>
<dbReference type="GO" id="GO:0090729">
    <property type="term" value="F:toxin activity"/>
    <property type="evidence" value="ECO:0007669"/>
    <property type="project" value="UniProtKB-KW"/>
</dbReference>
<dbReference type="GO" id="GO:0006952">
    <property type="term" value="P:defense response"/>
    <property type="evidence" value="ECO:0007669"/>
    <property type="project" value="UniProtKB-KW"/>
</dbReference>
<reference evidence="6" key="1">
    <citation type="journal article" date="2022" name="J. Biol. Chem.">
        <title>Neurotoxic and cytotoxic peptides underlie the painful stings of the tree nettle Urtica ferox.</title>
        <authorList>
            <person name="Xie J."/>
            <person name="Robinson S.D."/>
            <person name="Gilding E.K."/>
            <person name="Jami S."/>
            <person name="Deuis J.R."/>
            <person name="Rehm F.B.H."/>
            <person name="Yap K."/>
            <person name="Ragnarsson L."/>
            <person name="Chan L.Y."/>
            <person name="Hamilton B.R."/>
            <person name="Harvey P.J."/>
            <person name="Craik D.J."/>
            <person name="Vetter I."/>
            <person name="Durek T."/>
        </authorList>
    </citation>
    <scope>NUCLEOTIDE SEQUENCE [MRNA]</scope>
</reference>
<name>NAV2A_DENEC</name>
<protein>
    <recommendedName>
        <fullName evidence="3">Beta/delta-urticatoxin-De2a</fullName>
        <shortName evidence="3">Beta/delta-De2a</shortName>
    </recommendedName>
</protein>
<feature type="signal peptide" evidence="2">
    <location>
        <begin position="1"/>
        <end position="18"/>
    </location>
</feature>
<feature type="propeptide" id="PRO_0000459318" evidence="1">
    <location>
        <begin position="19"/>
        <end position="78"/>
    </location>
</feature>
<feature type="chain" id="PRO_0000459319" description="Beta/delta-urticatoxin-De2a" evidence="1">
    <location>
        <begin position="79"/>
        <end position="140"/>
    </location>
</feature>
<feature type="disulfide bond" evidence="4">
    <location>
        <begin position="81"/>
        <end position="95"/>
    </location>
</feature>
<feature type="disulfide bond" evidence="4">
    <location>
        <begin position="88"/>
        <end position="100"/>
    </location>
</feature>
<feature type="disulfide bond" evidence="4">
    <location>
        <begin position="94"/>
        <end position="108"/>
    </location>
</feature>
<feature type="disulfide bond" evidence="4">
    <location>
        <begin position="113"/>
        <end position="127"/>
    </location>
</feature>
<feature type="disulfide bond" evidence="4">
    <location>
        <begin position="120"/>
        <end position="131"/>
    </location>
</feature>
<feature type="disulfide bond" evidence="4">
    <location>
        <begin position="126"/>
        <end position="139"/>
    </location>
</feature>
<organism>
    <name type="scientific">Dendrocnide excelsa</name>
    <name type="common">Giant stinging tree</name>
    <name type="synonym">Urera excelsa</name>
    <dbReference type="NCBI Taxonomy" id="647263"/>
    <lineage>
        <taxon>Eukaryota</taxon>
        <taxon>Viridiplantae</taxon>
        <taxon>Streptophyta</taxon>
        <taxon>Embryophyta</taxon>
        <taxon>Tracheophyta</taxon>
        <taxon>Spermatophyta</taxon>
        <taxon>Magnoliopsida</taxon>
        <taxon>eudicotyledons</taxon>
        <taxon>Gunneridae</taxon>
        <taxon>Pentapetalae</taxon>
        <taxon>rosids</taxon>
        <taxon>fabids</taxon>
        <taxon>Rosales</taxon>
        <taxon>Urticaceae</taxon>
        <taxon>Dendrocnide</taxon>
    </lineage>
</organism>
<comment type="function">
    <text evidence="1">Plant defense neurotoxin that causes pain and systemic symptoms in mammals via modulation of voltage-gated sodium channels (Nav). Potent modulator of human Nav1.5/SCN5A (EC(50)=55 nM), Nav1.6/SCN8A (EC(50)=0.86 nM), and Nav1.7/SCN9A (EC(50)=208 nM), where it shifts the activation threshold to more negative potentials and delays fast inactivation. Also shifts the voltage-dependence of steady-state fast inactivation of Nav1.6/SCN8A, but not that of Nav1.5/SCN5A or Nav1.7/SCN9A. On Nav1.7/SCN9A, principally acts by binding to extracellular loops of domain IV (Nav site 3). In vivo, intraplantar injection into mice causes numerous dose-dependent, immediate, and long-lasting spontaneous pain behaviors, while no swelling is observed in the injected paw. At the highest doses tested, systemic symptoms including hypokinesia and hypersalivation are observed.</text>
</comment>
<comment type="subcellular location">
    <subcellularLocation>
        <location evidence="1">Secreted</location>
    </subcellularLocation>
</comment>
<comment type="tissue specificity">
    <text evidence="5">Expressed in trichomes, that are stiff epidermal hairs located on the surface of petioles and leaves.</text>
</comment>
<comment type="domain">
    <text evidence="4">The presence of 'disulfide through disulfide knots' structurally defines this protein as a knottin. This toxin contains 2 'disulfide through disulfide knots'.</text>
</comment>
<comment type="similarity">
    <text evidence="4">Belongs to the urticatoxin-2 family.</text>
</comment>